<reference key="1">
    <citation type="journal article" date="2008" name="J. Bacteriol.">
        <title>Insights into the environmental resistance gene pool from the genome sequence of the multidrug-resistant environmental isolate Escherichia coli SMS-3-5.</title>
        <authorList>
            <person name="Fricke W.F."/>
            <person name="Wright M.S."/>
            <person name="Lindell A.H."/>
            <person name="Harkins D.M."/>
            <person name="Baker-Austin C."/>
            <person name="Ravel J."/>
            <person name="Stepanauskas R."/>
        </authorList>
    </citation>
    <scope>NUCLEOTIDE SEQUENCE [LARGE SCALE GENOMIC DNA]</scope>
    <source>
        <strain>SMS-3-5 / SECEC</strain>
    </source>
</reference>
<organism>
    <name type="scientific">Escherichia coli (strain SMS-3-5 / SECEC)</name>
    <dbReference type="NCBI Taxonomy" id="439855"/>
    <lineage>
        <taxon>Bacteria</taxon>
        <taxon>Pseudomonadati</taxon>
        <taxon>Pseudomonadota</taxon>
        <taxon>Gammaproteobacteria</taxon>
        <taxon>Enterobacterales</taxon>
        <taxon>Enterobacteriaceae</taxon>
        <taxon>Escherichia</taxon>
    </lineage>
</organism>
<evidence type="ECO:0000255" key="1">
    <source>
        <dbReference type="HAMAP-Rule" id="MF_00514"/>
    </source>
</evidence>
<evidence type="ECO:0000256" key="2">
    <source>
        <dbReference type="SAM" id="MobiDB-lite"/>
    </source>
</evidence>
<evidence type="ECO:0000305" key="3"/>
<dbReference type="EMBL" id="CP000970">
    <property type="protein sequence ID" value="ACB19790.1"/>
    <property type="molecule type" value="Genomic_DNA"/>
</dbReference>
<dbReference type="RefSeq" id="WP_001124225.1">
    <property type="nucleotide sequence ID" value="NC_010498.1"/>
</dbReference>
<dbReference type="SMR" id="B1LE14"/>
<dbReference type="GeneID" id="97601348"/>
<dbReference type="KEGG" id="ecm:EcSMS35_1474"/>
<dbReference type="HOGENOM" id="CLU_169643_1_1_6"/>
<dbReference type="Proteomes" id="UP000007011">
    <property type="component" value="Chromosome"/>
</dbReference>
<dbReference type="GO" id="GO:0022625">
    <property type="term" value="C:cytosolic large ribosomal subunit"/>
    <property type="evidence" value="ECO:0007669"/>
    <property type="project" value="TreeGrafter"/>
</dbReference>
<dbReference type="GO" id="GO:0003735">
    <property type="term" value="F:structural constituent of ribosome"/>
    <property type="evidence" value="ECO:0007669"/>
    <property type="project" value="InterPro"/>
</dbReference>
<dbReference type="GO" id="GO:0006412">
    <property type="term" value="P:translation"/>
    <property type="evidence" value="ECO:0007669"/>
    <property type="project" value="UniProtKB-UniRule"/>
</dbReference>
<dbReference type="FunFam" id="4.10.410.60:FF:000001">
    <property type="entry name" value="50S ribosomal protein L35"/>
    <property type="match status" value="1"/>
</dbReference>
<dbReference type="Gene3D" id="4.10.410.60">
    <property type="match status" value="1"/>
</dbReference>
<dbReference type="HAMAP" id="MF_00514">
    <property type="entry name" value="Ribosomal_bL35"/>
    <property type="match status" value="1"/>
</dbReference>
<dbReference type="InterPro" id="IPR001706">
    <property type="entry name" value="Ribosomal_bL35"/>
</dbReference>
<dbReference type="InterPro" id="IPR021137">
    <property type="entry name" value="Ribosomal_bL35-like"/>
</dbReference>
<dbReference type="InterPro" id="IPR018265">
    <property type="entry name" value="Ribosomal_bL35_CS"/>
</dbReference>
<dbReference type="InterPro" id="IPR037229">
    <property type="entry name" value="Ribosomal_bL35_sf"/>
</dbReference>
<dbReference type="NCBIfam" id="TIGR00001">
    <property type="entry name" value="rpmI_bact"/>
    <property type="match status" value="1"/>
</dbReference>
<dbReference type="PANTHER" id="PTHR33343">
    <property type="entry name" value="54S RIBOSOMAL PROTEIN BL35M"/>
    <property type="match status" value="1"/>
</dbReference>
<dbReference type="PANTHER" id="PTHR33343:SF1">
    <property type="entry name" value="LARGE RIBOSOMAL SUBUNIT PROTEIN BL35M"/>
    <property type="match status" value="1"/>
</dbReference>
<dbReference type="Pfam" id="PF01632">
    <property type="entry name" value="Ribosomal_L35p"/>
    <property type="match status" value="1"/>
</dbReference>
<dbReference type="PRINTS" id="PR00064">
    <property type="entry name" value="RIBOSOMALL35"/>
</dbReference>
<dbReference type="SUPFAM" id="SSF143034">
    <property type="entry name" value="L35p-like"/>
    <property type="match status" value="1"/>
</dbReference>
<dbReference type="PROSITE" id="PS00936">
    <property type="entry name" value="RIBOSOMAL_L35"/>
    <property type="match status" value="1"/>
</dbReference>
<feature type="chain" id="PRO_1000127350" description="Large ribosomal subunit protein bL35">
    <location>
        <begin position="1"/>
        <end position="65"/>
    </location>
</feature>
<feature type="region of interest" description="Disordered" evidence="2">
    <location>
        <begin position="1"/>
        <end position="22"/>
    </location>
</feature>
<feature type="compositionally biased region" description="Basic residues" evidence="2">
    <location>
        <begin position="10"/>
        <end position="22"/>
    </location>
</feature>
<accession>B1LE14</accession>
<name>RL35_ECOSM</name>
<proteinExistence type="inferred from homology"/>
<keyword id="KW-0687">Ribonucleoprotein</keyword>
<keyword id="KW-0689">Ribosomal protein</keyword>
<comment type="similarity">
    <text evidence="1">Belongs to the bacterial ribosomal protein bL35 family.</text>
</comment>
<gene>
    <name evidence="1" type="primary">rpmI</name>
    <name type="ordered locus">EcSMS35_1474</name>
</gene>
<protein>
    <recommendedName>
        <fullName evidence="1">Large ribosomal subunit protein bL35</fullName>
    </recommendedName>
    <alternativeName>
        <fullName evidence="3">50S ribosomal protein L35</fullName>
    </alternativeName>
</protein>
<sequence length="65" mass="7289">MPKIKTVRGAAKRFKKTGKGGFKHKHANLRHILTKKATKRKRHLRPKAMVSKGDLGLVIACLPYA</sequence>